<sequence>MGASASVLTGSKLDAWEQIRLKPGSKKKYRLKHLVWASRELERFACNPELLETAEGNEKLLQQLEPALKTGSDSLQSLWNAIVVLWCVHNRYKIGDTQQAIQKLKEVMGSRKSADAAKEDTSARQAGQNYPIVSNAQGQMVHQAISPRTLNAWVKAVEEKAFNPEIIPMFMALSEGAISYDINTMLNAIGGHQGALQVLKEVINEEAVEWDRTHPPPVGPLPPGQIREPTGSDIAGTTSTQQEQIHWTTRPNQPIPVGDIYRKWIVLGLNKMVKMYSPVSILDIKQGPKEPFRDYVDRFYKTLRAEQATQEVKNWMTETLLVQNANPDCKQILKSLGPGATLEEMMVACQGVGGPTHKARVLAEAMATAQQDLKGGYTAVFMQRGQNPIRKGTIKCFNCGKEGHIARNCRAPRKKGCWKCGQEGHQMKDCRNGKQFFRQILASGGHEARQLCAETSTPISPTDGGGSEGTGESGTERGPERALSVCLPQIPLWDRPIVTARVGGHLCEVLLDTGADDTVLNNIQLEGKWKPKMIGGIGGFIKVKEYDNVTVEIEGREVQGTVLVGPTPVNIIGRNILTGLGCTLNFPISPIAPVPVKLKPGMDGPKVKQWPLSKEKIEALTAICQEMEQEGKISRIGPENPYNTPIFAIKKKDGTKWRKLVDFRELNKRTQEFWEVQLGIPHPGGLKQKQSVTVLDVGDAYFSCPLDPDFRKYTAFTIPSVNNETPGIRYQYNVLPQGWKGSPAIFQSSMTKILDPFRRDNPELEICQYMDDLYVGSDLPLTEHRKRIELLREHLYQWGFTTPDKKHQKEPPFLWMGYELHPDKWTVQSIQLPNKDVWTVNDIQKLIGKLNWASQIYQGIRVRELCKLIRGTKSLTEVVPLSREAELELEENRERLKQPVHGVYYQPDKDLWVNIQKQGGEQWTYQIYQEEHKNLKTGKYTRQKASHTNDIRQLAEVIQKVSQESIIIWGKLPKFKLPVTRETWETWWADYWQATWIPEWEFVSTPPLIKLWYRLESEPIMGAETYYVDGAANRETKLGKAGYVTEQGKQKIIKLDETTNQKAELMAILLALQDSKETVNIVTDSQYALGVISSQPTQSESPIVQQIIEELTKKEQVYLTWVPAHKGIGGNEKIDKLVSKDIRRVLFLEGIDQAQEDHEKYHSNWKALASEFGLPPVVAKEIIASCPKCHIKGEAIHGQVDCSPEVWQIDCTHMEGKIIIVAVHVASGFIEAEVIPAETGQETAYFLLKLAARWPVKVIHTDNGPNFTSTTMKAACWWANIQHEFGIPYNPQSQGVVEAMNKELKSIIQQVRDQAEHLRTAVQMAVFVHNFKRKGGIGGYTAGERIIDILASQIQTTELQKQILKXHKFRVYYRDSRDPIWKGPAQLLWKGEGAVVIQDKGDIKVVPRRKAKIIREYGKQMAGTDSMASGQTESE</sequence>
<name>POL_HV1AN</name>
<organism>
    <name type="scientific">Human immunodeficiency virus type 1 group O (isolate ANT70)</name>
    <name type="common">HIV-1</name>
    <dbReference type="NCBI Taxonomy" id="327105"/>
    <lineage>
        <taxon>Viruses</taxon>
        <taxon>Riboviria</taxon>
        <taxon>Pararnavirae</taxon>
        <taxon>Artverviricota</taxon>
        <taxon>Revtraviricetes</taxon>
        <taxon>Ortervirales</taxon>
        <taxon>Retroviridae</taxon>
        <taxon>Orthoretrovirinae</taxon>
        <taxon>Lentivirus</taxon>
        <taxon>Human immunodeficiency virus type 1</taxon>
    </lineage>
</organism>
<comment type="function">
    <molecule>Gag-Pol polyprotein</molecule>
    <text evidence="1">Mediates, with Gag polyprotein, the essential events in virion assembly, including binding the plasma membrane, making the protein-protein interactions necessary to create spherical particles, recruiting the viral Env proteins, and packaging the genomic RNA via direct interactions with the RNA packaging sequence (Psi). Gag-Pol polyprotein may regulate its own translation, by the binding genomic RNA in the 5'-UTR. At low concentration, the polyprotein would promote translation, whereas at high concentration, the polyprotein would encapsidate genomic RNA and then shut off translation.</text>
</comment>
<comment type="function">
    <molecule>Matrix protein p17</molecule>
    <text evidence="7">Targets the polyprotein to the plasma membrane via a multipartite membrane-binding signal, that includes its myristoylated N-terminus. Matrix protein is part of the pre-integration complex. Implicated in the release from host cell mediated by Vpu. Binds to RNA.</text>
</comment>
<comment type="function">
    <molecule>Capsid protein p24</molecule>
    <text evidence="5 7">Forms the conical core that encapsulates the genomic RNA-nucleocapsid complex in the virion. Most core are conical, with only 7% tubular. The core is constituted by capsid protein hexamer subunits. The core is disassembled soon after virion entry (By similarity). Host restriction factors such as TRIM5-alpha or TRIMCyp bind retroviral capsids and cause premature capsid disassembly, leading to blocks in reverse transcription. Capsid restriction by TRIM5 is one of the factors which restricts HIV-1 to the human species. Host PIN1 apparently facilitates the virion uncoating. On the other hand, interactions with PDZD8 or CYPA stabilize the capsid.</text>
</comment>
<comment type="function">
    <molecule>Nucleocapsid protein p7</molecule>
    <text evidence="5">Encapsulates and protects viral dimeric unspliced genomic RNA (gRNA). Binds these RNAs through its zinc fingers. Acts as a nucleic acid chaperone which is involved in rearangement of nucleic acid secondary structure during gRNA retrotranscription. Also facilitates template switch leading to recombination. As part of the polyprotein, participates in gRNA dimerization, packaging, tRNA incorporation and virion assembly.</text>
</comment>
<comment type="function">
    <molecule>Protease</molecule>
    <text evidence="5 10">Aspartyl protease that mediates proteolytic cleavages of Gag and Gag-Pol polyproteins during or shortly after the release of the virion from the plasma membrane. Cleavages take place as an ordered, step-wise cascade to yield mature proteins. This process is called maturation. Displays maximal activity during the budding process just prior to particle release from the cell. Also cleaves Nef and Vif, probably concomitantly with viral structural proteins on maturation of virus particles. Hydrolyzes host EIF4GI and PABP1 in order to shut off the capped cellular mRNA translation. The resulting inhibition of cellular protein synthesis serves to ensure maximal viral gene expression and to evade host immune response. Also mediates cleavage of host YTHDF3. Mediates cleavage of host CARD8, thereby activating the CARD8 inflammasome, leading to the clearance of latent HIV-1 in patient CD4(+) T-cells after viral reactivation; in contrast, HIV-1 can evade CARD8-sensing when its protease remains inactive in infected cells prior to viral budding (By similarity).</text>
</comment>
<comment type="function">
    <molecule>Reverse transcriptase/ribonuclease H</molecule>
    <text evidence="5">Multifunctional enzyme that converts the viral RNA genome into dsDNA in the cytoplasm, shortly after virus entry into the cell. This enzyme displays a DNA polymerase activity that can copy either DNA or RNA templates, and a ribonuclease H (RNase H) activity that cleaves the RNA strand of RNA-DNA heteroduplexes in a partially processive 3' to 5' endonucleasic mode. Conversion of viral genomic RNA into dsDNA requires many steps. A tRNA(3)-Lys binds to the primer-binding site (PBS) situated at the 5'-end of the viral RNA. RT uses the 3' end of the tRNA primer to perform a short round of RNA-dependent minus-strand DNA synthesis. The reading proceeds through the U5 region and ends after the repeated (R) region which is present at both ends of viral RNA. The portion of the RNA-DNA heteroduplex is digested by the RNase H, resulting in a ssDNA product attached to the tRNA primer. This ssDNA/tRNA hybridizes with the identical R region situated at the 3' end of viral RNA. This template exchange, known as minus-strand DNA strong stop transfer, can be either intra- or intermolecular. RT uses the 3' end of this newly synthesized short ssDNA to perform the RNA-dependent minus-strand DNA synthesis of the whole template. RNase H digests the RNA template except for two polypurine tracts (PPTs) situated at the 5'-end and near the center of the genome. It is not clear if both polymerase and RNase H activities are simultaneous. RNase H probably can proceed both in a polymerase-dependent (RNA cut into small fragments by the same RT performing DNA synthesis) and a polymerase-independent mode (cleavage of remaining RNA fragments by free RTs). Secondly, RT performs DNA-directed plus-strand DNA synthesis using the PPTs that have not been removed by RNase H as primers. PPTs and tRNA primers are then removed by RNase H. The 3' and 5' ssDNA PBS regions hybridize to form a circular dsDNA intermediate. Strand displacement synthesis by RT to the PBS and PPT ends produces a blunt ended, linear dsDNA copy of the viral genome that includes long terminal repeats (LTRs) at both ends.</text>
</comment>
<comment type="function">
    <molecule>Integrase</molecule>
    <text evidence="5">Catalyzes viral DNA integration into the host chromosome, by performing a series of DNA cutting and joining reactions. This enzyme activity takes place after virion entry into a cell and reverse transcription of the RNA genome in dsDNA. The first step in the integration process is 3' processing. This step requires a complex comprising the viral genome, matrix protein, Vpr and integrase. This complex is called the pre-integration complex (PIC). The integrase protein removes 2 nucleotides from each 3' end of the viral DNA, leaving recessed CA OH's at the 3' ends. In the second step, the PIC enters cell nucleus. This process is mediated through integrase and Vpr proteins, and allows the virus to infect a non dividing cell. This ability to enter the nucleus is specific of lentiviruses, other retroviruses cannot and rely on cell division to access cell chromosomes. In the third step, termed strand transfer, the integrase protein joins the previously processed 3' ends to the 5' ends of strands of target cellular DNA at the site of integration. The 5'-ends are produced by integrase-catalyzed staggered cuts, 5 bp apart. A Y-shaped, gapped, recombination intermediate results, with the 5'-ends of the viral DNA strands and the 3' ends of target DNA strands remaining unjoined, flanking a gap of 5 bp. The last step is viral DNA integration into host chromosome. This involves host DNA repair synthesis in which the 5 bp gaps between the unjoined strands are filled in and then ligated. Since this process occurs at both cuts flanking the HIV genome, a 5 bp duplication of host DNA is produced at the ends of HIV-1 integration. Alternatively, Integrase may catalyze the excision of viral DNA just after strand transfer, this is termed disintegration.</text>
</comment>
<comment type="catalytic activity">
    <reaction evidence="10">
        <text>Specific for a P1 residue that is hydrophobic, and P1' variable, but often Pro.</text>
        <dbReference type="EC" id="3.4.23.16"/>
    </reaction>
</comment>
<comment type="catalytic activity">
    <reaction evidence="1">
        <text>Endohydrolysis of RNA in RNA/DNA hybrids. Three different cleavage modes: 1. sequence-specific internal cleavage of RNA. Human immunodeficiency virus type 1 and Moloney murine leukemia virus enzymes prefer to cleave the RNA strand one nucleotide away from the RNA-DNA junction. 2. RNA 5'-end directed cleavage 13-19 nucleotides from the RNA end. 3. DNA 3'-end directed cleavage 15-20 nucleotides away from the primer terminus.</text>
        <dbReference type="EC" id="3.1.26.13"/>
    </reaction>
</comment>
<comment type="catalytic activity">
    <reaction evidence="1">
        <text>3'-end directed exonucleolytic cleavage of viral RNA-DNA hybrid.</text>
        <dbReference type="EC" id="3.1.13.2"/>
    </reaction>
</comment>
<comment type="catalytic activity">
    <reaction evidence="11">
        <text>DNA(n) + a 2'-deoxyribonucleoside 5'-triphosphate = DNA(n+1) + diphosphate</text>
        <dbReference type="Rhea" id="RHEA:22508"/>
        <dbReference type="Rhea" id="RHEA-COMP:17339"/>
        <dbReference type="Rhea" id="RHEA-COMP:17340"/>
        <dbReference type="ChEBI" id="CHEBI:33019"/>
        <dbReference type="ChEBI" id="CHEBI:61560"/>
        <dbReference type="ChEBI" id="CHEBI:173112"/>
        <dbReference type="EC" id="2.7.7.49"/>
    </reaction>
</comment>
<comment type="catalytic activity">
    <reaction evidence="11">
        <text>DNA(n) + a 2'-deoxyribonucleoside 5'-triphosphate = DNA(n+1) + diphosphate</text>
        <dbReference type="Rhea" id="RHEA:22508"/>
        <dbReference type="Rhea" id="RHEA-COMP:17339"/>
        <dbReference type="Rhea" id="RHEA-COMP:17340"/>
        <dbReference type="ChEBI" id="CHEBI:33019"/>
        <dbReference type="ChEBI" id="CHEBI:61560"/>
        <dbReference type="ChEBI" id="CHEBI:173112"/>
        <dbReference type="EC" id="2.7.7.7"/>
    </reaction>
</comment>
<comment type="cofactor">
    <cofactor evidence="1">
        <name>Mg(2+)</name>
        <dbReference type="ChEBI" id="CHEBI:18420"/>
    </cofactor>
    <text evidence="1">Binds 2 magnesium ions for reverse transcriptase polymerase activity.</text>
</comment>
<comment type="cofactor">
    <cofactor evidence="1">
        <name>Mg(2+)</name>
        <dbReference type="ChEBI" id="CHEBI:18420"/>
    </cofactor>
    <text evidence="1">Binds 2 magnesium ions for ribonuclease H (RNase H) activity. Substrate-binding is a precondition for magnesium binding.</text>
</comment>
<comment type="cofactor">
    <cofactor evidence="1">
        <name>Mg(2+)</name>
        <dbReference type="ChEBI" id="CHEBI:18420"/>
    </cofactor>
    <text evidence="1">Magnesium ions are required for integrase activity. Binds at least 1, maybe 2 magnesium ions.</text>
</comment>
<comment type="activity regulation">
    <text evidence="1">Protease: The viral protease is inhibited by many synthetic protease inhibitors (PIs), such as amprenavir, atazanavir, indinavir, loprinavir, nelfinavir, ritonavir and saquinavir. Use of protease inhibitors in tritherapy regimens permit more ambitious therapeutic strategies. Reverse transcriptase/ribonuclease H: RT can be inhibited either by nucleoside RT inhibitors (NRTIs) or by non nucleoside RT inhibitors (NNRTIs). NRTIs act as chain terminators, whereas NNRTIs inhibit DNA polymerization by binding a small hydrophobic pocket near the RT active site and inducing an allosteric change in this region. Classical NRTIs are abacavir, adefovir (PMEA), didanosine (ddI), lamivudine (3TC), stavudine (d4T), tenofovir (PMPA), zalcitabine (ddC), and zidovudine (AZT). Classical NNRTIs are atevirdine (BHAP U-87201E), delavirdine, efavirenz (DMP-266), emivirine (I-EBU), and nevirapine (BI-RG-587). The tritherapies used as a basic effective treatment of AIDS associate two NRTIs and one NNRTI.</text>
</comment>
<comment type="subunit">
    <molecule>Matrix protein p17</molecule>
    <text evidence="5 7">Homotrimer; further assembles as hexamers of trimers (By similarity). Interacts with gp41 (via C-terminus) (By similarity). Interacts with host CALM1; this interaction induces a conformational change in the Matrix protein, triggering exposure of the myristate group (By similarity). Interacts with host AP3D1; this interaction allows the polyprotein trafficking to multivesicular bodies during virus assembly (By similarity). Part of the pre-integration complex (PIC) which is composed of viral genome, matrix protein, Vpr and integrase (By similarity).</text>
</comment>
<comment type="subunit">
    <molecule>Capsid protein p24</molecule>
    <text evidence="5 7">Homodimer; the homodimer further multimerizes as homohexamers or homopentamers. Interacts with human PPIA/CYPA (By similarity); This interaction stabilizes the capsid. Interacts with human NUP153 (By similarity). Interacts with host PDZD8; this interaction stabilizes the capsid (By similarity). Interacts with monkey TRIM5; this interaction destabilizes the capsid (By similarity).</text>
</comment>
<comment type="subunit">
    <molecule>Protease</molecule>
    <text evidence="5 7">Homodimer, whose active site consists of two apposed aspartic acid residues.</text>
</comment>
<comment type="subunit">
    <molecule>Reverse transcriptase/ribonuclease H</molecule>
    <text evidence="3">Heterodimer of p66 RT and p51 RT (RT p66/p51) (By similarity). Heterodimerization of RT is essential for DNA polymerase activity (By similarity). The overall folding of the subdomains is similar in p66 RT and p51 RT but the spatial arrangements of the subdomains are dramatically different (By similarity).</text>
</comment>
<comment type="subunit">
    <molecule>Integrase</molecule>
    <text evidence="4 5 7">Homotetramer; may further associate as a homohexadecamer (By similarity). Part of the pre-integration complex (PIC) which is composed of viral genome, matrix protein, Vpr and integrase. Interacts with human SMARCB1/INI1 and human PSIP1/LEDGF isoform 1. Interacts with human KPNA3; this interaction might play a role in nuclear import of the pre-integration complex (By similarity). Interacts with human NUP153; this interaction might play a role in nuclear import of the pre-integration complex (By similarity).</text>
</comment>
<comment type="subcellular location">
    <molecule>Gag-Pol polyprotein</molecule>
    <subcellularLocation>
        <location>Host cell membrane</location>
        <topology>Lipid-anchor</topology>
    </subcellularLocation>
    <subcellularLocation>
        <location>Host endosome</location>
        <location>Host multivesicular body</location>
    </subcellularLocation>
    <text evidence="7">These locations are linked to virus assembly sites. The main location is the cell membrane, but under some circumstances, late endosomal compartments can serve as productive sites for virion assembly.</text>
</comment>
<comment type="subcellular location">
    <molecule>Matrix protein p17</molecule>
    <subcellularLocation>
        <location>Virion membrane</location>
        <topology evidence="18">Lipid-anchor</topology>
    </subcellularLocation>
    <subcellularLocation>
        <location evidence="1">Host nucleus</location>
    </subcellularLocation>
    <subcellularLocation>
        <location evidence="1">Host cytoplasm</location>
    </subcellularLocation>
</comment>
<comment type="subcellular location">
    <molecule>Capsid protein p24</molecule>
    <subcellularLocation>
        <location evidence="18">Virion</location>
    </subcellularLocation>
</comment>
<comment type="subcellular location">
    <molecule>Nucleocapsid protein p7</molecule>
    <subcellularLocation>
        <location evidence="18">Virion</location>
    </subcellularLocation>
</comment>
<comment type="subcellular location">
    <molecule>Reverse transcriptase/ribonuclease H</molecule>
    <subcellularLocation>
        <location evidence="18">Virion</location>
    </subcellularLocation>
</comment>
<comment type="subcellular location">
    <molecule>Integrase</molecule>
    <subcellularLocation>
        <location evidence="18">Virion</location>
    </subcellularLocation>
    <subcellularLocation>
        <location evidence="18">Host nucleus</location>
    </subcellularLocation>
    <subcellularLocation>
        <location evidence="18">Host cytoplasm</location>
    </subcellularLocation>
    <text evidence="18">Nuclear at initial phase, cytoplasmic at assembly.</text>
</comment>
<comment type="alternative products">
    <event type="ribosomal frameshifting"/>
    <isoform>
        <id>Q77373-1</id>
        <name>Gag-Pol polyprotein</name>
        <sequence type="displayed"/>
    </isoform>
    <isoform>
        <id>Q77372-1</id>
        <name>Gag polyprotein</name>
        <sequence type="external"/>
    </isoform>
    <text>Translation results in the formation of the Gag polyprotein most of the time. Ribosomal frameshifting at the gag-pol genes boundary occurs at low frequency and produces the Gag-Pol polyprotein. This strategy of translation probably allows the virus to modulate the quantity of each viral protein. Maintenance of a correct Gag to Gag-Pol ratio is essential for RNA dimerization and viral infectivity.</text>
</comment>
<comment type="domain">
    <molecule>Reverse transcriptase/ribonuclease H</molecule>
    <text evidence="1">RT is structured in five subdomains: finger, palm, thumb, connection and RNase H. Within the palm subdomain, the 'primer grip' region is thought to be involved in the positioning of the primer terminus for accommodating the incoming nucleotide. The RNase H domain stabilizes the association of RT with primer-template.</text>
</comment>
<comment type="domain">
    <molecule>Reverse transcriptase/ribonuclease H</molecule>
    <text evidence="1">The tryptophan repeat motif is involved in RT p66/p51 dimerization (By similarity).</text>
</comment>
<comment type="domain">
    <molecule>Integrase</molecule>
    <text evidence="1">The core domain contains the D-x(n)-D-x(35)-E motif, named for the phylogenetically conserved glutamic acid and aspartic acid residues and the invariant 35 amino acid spacing between the second and third acidic residues. Each acidic residue of the D,D(35)E motif is independently essential for the 3'-processing and strand transfer activities of purified integrase protein.</text>
</comment>
<comment type="PTM">
    <molecule>Gag-Pol polyprotein</molecule>
    <text evidence="5 11">Specific enzymatic cleavages by the viral protease yield mature proteins. The protease is released by autocatalytic cleavage. The polyprotein is cleaved during and after budding, this process is termed maturation. Proteolytic cleavage of p66 RT removes the RNase H domain to yield the p51 RT subunit. Nucleocapsid protein p7 might be further cleaved after virus entry.</text>
</comment>
<comment type="PTM">
    <molecule>Matrix protein p17</molecule>
    <text evidence="5">Tyrosine phosphorylated presumably in the virion by a host kinase. Phosphorylation is apparently not a major regulator of membrane association.</text>
</comment>
<comment type="PTM">
    <molecule>Capsid protein p24</molecule>
    <text evidence="6">Phosphorylated possibly by host MAPK1; this phosphorylation is necessary for Pin1-mediated virion uncoating.</text>
</comment>
<comment type="PTM">
    <molecule>Nucleocapsid protein p7</molecule>
    <text evidence="2">Methylated by host PRMT6, impairing its function by reducing RNA annealing and the initiation of reverse transcription.</text>
</comment>
<comment type="miscellaneous">
    <molecule>Reverse transcriptase/ribonuclease H</molecule>
    <text evidence="1">Error-prone enzyme that lacks a proof-reading function. High mutations rate is a direct consequence of this characteristic. RT also displays frequent template switching leading to high recombination rate. Recombination mostly occurs between homologous regions of the two copackaged RNA genomes. If these two RNA molecules derive from different viral strains, reverse transcription will give rise to highly recombinated proviral DNAs.</text>
</comment>
<comment type="miscellaneous">
    <text>HIV-1 lineages are divided in three main groups, M (for Major), O (for Outlier), and N (for New, or Non-M, Non-O). The vast majority of strains found worldwide belong to the group M. Group O seems to be endemic to and largely confined to Cameroon and neighboring countries in West Central Africa, where these viruses represent a small minority of HIV-1 strains. The group N is represented by a limited number of isolates from Cameroonian persons. The group M is further subdivided in 9 clades or subtypes (A to D, F to H, J and K).</text>
</comment>
<comment type="miscellaneous">
    <text>Resistance to inhibitors associated with mutations are observed both in viral protease and in reverse transcriptase. Most of the time, single mutations confer only a modest reduction in drug susceptibility. Combination of several mutations is usually required to develop a high-level drug resistance. These mutations are predominantly found in clade B viruses and not in other genotypes. They are listed in the clade B representative isolate HXB2 (AC P04585).</text>
</comment>
<comment type="miscellaneous">
    <molecule>Isoform Gag-Pol polyprotein</molecule>
    <text>Produced by -1 ribosomal frameshifting.</text>
</comment>
<comment type="online information" name="HIV drug resistance mutations">
    <link uri="https://www.iasusa.org/hiv-drug-resistance/hiv-drug-resistance-mutations/"/>
</comment>
<comment type="online information" name="hivdb">
    <link uri="https://hivdb.stanford.edu"/>
    <text>HIV drug resistance database</text>
</comment>
<reference key="1">
    <citation type="journal article" date="1994" name="J. Virol.">
        <title>Genomic cloning and complete sequence analysis of a highly divergent African human immunodeficiency virus isolate.</title>
        <authorList>
            <person name="Vanden Haesevelde M."/>
            <person name="Decourt J.L."/>
            <person name="De Leys R.J."/>
            <person name="Vanderborght B."/>
            <person name="van der Groen G."/>
            <person name="van Heuverswijn H."/>
            <person name="Saman E."/>
        </authorList>
    </citation>
    <scope>NUCLEOTIDE SEQUENCE [GENOMIC RNA]</scope>
</reference>
<organismHost>
    <name type="scientific">Homo sapiens</name>
    <name type="common">Human</name>
    <dbReference type="NCBI Taxonomy" id="9606"/>
</organismHost>
<gene>
    <name type="primary">gag-pol</name>
</gene>
<evidence type="ECO:0000250" key="1"/>
<evidence type="ECO:0000250" key="2">
    <source>
        <dbReference type="UniProtKB" id="P03347"/>
    </source>
</evidence>
<evidence type="ECO:0000250" key="3">
    <source>
        <dbReference type="UniProtKB" id="P03366"/>
    </source>
</evidence>
<evidence type="ECO:0000250" key="4">
    <source>
        <dbReference type="UniProtKB" id="P03367"/>
    </source>
</evidence>
<evidence type="ECO:0000250" key="5">
    <source>
        <dbReference type="UniProtKB" id="P04585"/>
    </source>
</evidence>
<evidence type="ECO:0000250" key="6">
    <source>
        <dbReference type="UniProtKB" id="P12493"/>
    </source>
</evidence>
<evidence type="ECO:0000250" key="7">
    <source>
        <dbReference type="UniProtKB" id="P12497"/>
    </source>
</evidence>
<evidence type="ECO:0000255" key="8"/>
<evidence type="ECO:0000255" key="9">
    <source>
        <dbReference type="PROSITE-ProRule" id="PRU00047"/>
    </source>
</evidence>
<evidence type="ECO:0000255" key="10">
    <source>
        <dbReference type="PROSITE-ProRule" id="PRU00275"/>
    </source>
</evidence>
<evidence type="ECO:0000255" key="11">
    <source>
        <dbReference type="PROSITE-ProRule" id="PRU00405"/>
    </source>
</evidence>
<evidence type="ECO:0000255" key="12">
    <source>
        <dbReference type="PROSITE-ProRule" id="PRU00408"/>
    </source>
</evidence>
<evidence type="ECO:0000255" key="13">
    <source>
        <dbReference type="PROSITE-ProRule" id="PRU00450"/>
    </source>
</evidence>
<evidence type="ECO:0000255" key="14">
    <source>
        <dbReference type="PROSITE-ProRule" id="PRU00457"/>
    </source>
</evidence>
<evidence type="ECO:0000255" key="15">
    <source>
        <dbReference type="PROSITE-ProRule" id="PRU00506"/>
    </source>
</evidence>
<evidence type="ECO:0000255" key="16">
    <source>
        <dbReference type="PROSITE-ProRule" id="PRU10094"/>
    </source>
</evidence>
<evidence type="ECO:0000256" key="17">
    <source>
        <dbReference type="SAM" id="MobiDB-lite"/>
    </source>
</evidence>
<evidence type="ECO:0000305" key="18"/>
<proteinExistence type="inferred from homology"/>
<feature type="initiator methionine" description="Removed; by host" evidence="1">
    <location>
        <position position="1"/>
    </location>
</feature>
<feature type="chain" id="PRO_0000261259" description="Gag-Pol polyprotein">
    <location>
        <begin position="2"/>
        <end position="1435"/>
    </location>
</feature>
<feature type="chain" id="PRO_0000246486" description="Matrix protein p17" evidence="1">
    <location>
        <begin position="2"/>
        <end position="130"/>
    </location>
</feature>
<feature type="chain" id="PRO_0000246487" description="Capsid protein p24" evidence="1">
    <location>
        <begin position="131"/>
        <end position="362"/>
    </location>
</feature>
<feature type="peptide" id="PRO_0000246488" description="Spacer peptide 1" evidence="1">
    <location>
        <begin position="363"/>
        <end position="381"/>
    </location>
</feature>
<feature type="chain" id="PRO_0000246489" description="Nucleocapsid protein p7" evidence="1">
    <location>
        <begin position="382"/>
        <end position="435" status="uncertain"/>
    </location>
</feature>
<feature type="peptide" id="PRO_0000246708" description="Transframe peptide" evidence="8">
    <location>
        <begin position="435" status="uncertain"/>
        <end position="442"/>
    </location>
</feature>
<feature type="chain" id="PRO_0000246490" description="p6-pol" evidence="8">
    <location>
        <begin position="444"/>
        <end position="487"/>
    </location>
</feature>
<feature type="chain" id="PRO_0000246491" description="Protease" evidence="1">
    <location>
        <begin position="488"/>
        <end position="586"/>
    </location>
</feature>
<feature type="chain" id="PRO_0000246492" description="Reverse transcriptase/ribonuclease H" evidence="1">
    <location>
        <begin position="587"/>
        <end position="1146"/>
    </location>
</feature>
<feature type="chain" id="PRO_0000246493" description="p51 RT" evidence="1">
    <location>
        <begin position="587"/>
        <end position="1026"/>
    </location>
</feature>
<feature type="chain" id="PRO_0000246494" description="p15" evidence="1">
    <location>
        <begin position="1027"/>
        <end position="1146"/>
    </location>
</feature>
<feature type="chain" id="PRO_0000246495" description="Integrase" evidence="1">
    <location>
        <begin position="1147"/>
        <end position="1435"/>
    </location>
</feature>
<feature type="domain" description="Peptidase A2" evidence="10">
    <location>
        <begin position="507"/>
        <end position="576"/>
    </location>
</feature>
<feature type="domain" description="Reverse transcriptase" evidence="11">
    <location>
        <begin position="630"/>
        <end position="820"/>
    </location>
</feature>
<feature type="domain" description="RNase H type-1" evidence="12">
    <location>
        <begin position="1020"/>
        <end position="1143"/>
    </location>
</feature>
<feature type="domain" description="Integrase catalytic" evidence="14">
    <location>
        <begin position="1200"/>
        <end position="1350"/>
    </location>
</feature>
<feature type="zinc finger region" description="CCHC-type 1" evidence="9">
    <location>
        <begin position="394"/>
        <end position="411"/>
    </location>
</feature>
<feature type="zinc finger region" description="CCHC-type 2" evidence="9">
    <location>
        <begin position="415"/>
        <end position="432"/>
    </location>
</feature>
<feature type="zinc finger region" description="Integrase-type" evidence="13">
    <location>
        <begin position="1149"/>
        <end position="1190"/>
    </location>
</feature>
<feature type="DNA-binding region" description="Integrase-type" evidence="15">
    <location>
        <begin position="1369"/>
        <end position="1416"/>
    </location>
</feature>
<feature type="region of interest" description="Interaction with Gp41" evidence="7">
    <location>
        <begin position="7"/>
        <end position="31"/>
    </location>
</feature>
<feature type="region of interest" description="Interaction with host CALM1" evidence="5">
    <location>
        <begin position="8"/>
        <end position="43"/>
    </location>
</feature>
<feature type="region of interest" description="Interaction with host AP3D1" evidence="7">
    <location>
        <begin position="12"/>
        <end position="19"/>
    </location>
</feature>
<feature type="region of interest" description="Interaction with membrane phosphatidylinositol 4,5-bisphosphate and RNA" evidence="7">
    <location>
        <begin position="14"/>
        <end position="33"/>
    </location>
</feature>
<feature type="region of interest" description="Interaction with membrane phosphatidylinositol 4,5-bisphosphate" evidence="7">
    <location>
        <begin position="73"/>
        <end position="77"/>
    </location>
</feature>
<feature type="region of interest" description="Interaction with human PPIA/CYPA and NUP153" evidence="7">
    <location>
        <begin position="187"/>
        <end position="225"/>
    </location>
</feature>
<feature type="region of interest" description="Disordered" evidence="17">
    <location>
        <begin position="212"/>
        <end position="232"/>
    </location>
</feature>
<feature type="region of interest" description="Dimerization/Multimerization of capsid protein p24" evidence="5">
    <location>
        <begin position="276"/>
        <end position="362"/>
    </location>
</feature>
<feature type="region of interest" description="Disordered" evidence="17">
    <location>
        <begin position="455"/>
        <end position="480"/>
    </location>
</feature>
<feature type="region of interest" description="Dimerization of protease" evidence="5">
    <location>
        <begin position="488"/>
        <end position="492"/>
    </location>
</feature>
<feature type="region of interest" description="Dimerization of protease" evidence="5">
    <location>
        <begin position="536"/>
        <end position="542"/>
    </location>
</feature>
<feature type="region of interest" description="Dimerization of protease" evidence="5">
    <location>
        <begin position="575"/>
        <end position="587"/>
    </location>
</feature>
<feature type="region of interest" description="RT 'primer grip'" evidence="1">
    <location>
        <begin position="813"/>
        <end position="821"/>
    </location>
</feature>
<feature type="short sequence motif" description="Nuclear export signal" evidence="1">
    <location>
        <begin position="16"/>
        <end position="22"/>
    </location>
</feature>
<feature type="short sequence motif" description="Nuclear localization signal" evidence="1">
    <location>
        <begin position="26"/>
        <end position="32"/>
    </location>
</feature>
<feature type="short sequence motif" description="Tryptophan repeat motif" evidence="1">
    <location>
        <begin position="984"/>
        <end position="1000"/>
    </location>
</feature>
<feature type="compositionally biased region" description="Gly residues" evidence="17">
    <location>
        <begin position="463"/>
        <end position="472"/>
    </location>
</feature>
<feature type="active site" description="For protease activity; shared with dimeric partner" evidence="16">
    <location>
        <position position="512"/>
    </location>
</feature>
<feature type="binding site" evidence="1">
    <location>
        <position position="696"/>
    </location>
    <ligand>
        <name>Mg(2+)</name>
        <dbReference type="ChEBI" id="CHEBI:18420"/>
        <label>1</label>
        <note>catalytic; for reverse transcriptase activity</note>
    </ligand>
</feature>
<feature type="binding site" evidence="1">
    <location>
        <position position="771"/>
    </location>
    <ligand>
        <name>Mg(2+)</name>
        <dbReference type="ChEBI" id="CHEBI:18420"/>
        <label>1</label>
        <note>catalytic; for reverse transcriptase activity</note>
    </ligand>
</feature>
<feature type="binding site" evidence="1">
    <location>
        <position position="772"/>
    </location>
    <ligand>
        <name>Mg(2+)</name>
        <dbReference type="ChEBI" id="CHEBI:18420"/>
        <label>1</label>
        <note>catalytic; for reverse transcriptase activity</note>
    </ligand>
</feature>
<feature type="binding site" evidence="1">
    <location>
        <position position="1029"/>
    </location>
    <ligand>
        <name>Mg(2+)</name>
        <dbReference type="ChEBI" id="CHEBI:18420"/>
        <label>2</label>
        <note>catalytic; for RNase H activity</note>
    </ligand>
</feature>
<feature type="binding site" evidence="1">
    <location>
        <position position="1064"/>
    </location>
    <ligand>
        <name>Mg(2+)</name>
        <dbReference type="ChEBI" id="CHEBI:18420"/>
        <label>2</label>
        <note>catalytic; for RNase H activity</note>
    </ligand>
</feature>
<feature type="binding site" evidence="1">
    <location>
        <position position="1084"/>
    </location>
    <ligand>
        <name>Mg(2+)</name>
        <dbReference type="ChEBI" id="CHEBI:18420"/>
        <label>2</label>
        <note>catalytic; for RNase H activity</note>
    </ligand>
</feature>
<feature type="binding site" evidence="1">
    <location>
        <position position="1135"/>
    </location>
    <ligand>
        <name>Mg(2+)</name>
        <dbReference type="ChEBI" id="CHEBI:18420"/>
        <label>2</label>
        <note>catalytic; for RNase H activity</note>
    </ligand>
</feature>
<feature type="binding site" evidence="13">
    <location>
        <position position="1158"/>
    </location>
    <ligand>
        <name>Zn(2+)</name>
        <dbReference type="ChEBI" id="CHEBI:29105"/>
    </ligand>
</feature>
<feature type="binding site" evidence="13">
    <location>
        <position position="1162"/>
    </location>
    <ligand>
        <name>Zn(2+)</name>
        <dbReference type="ChEBI" id="CHEBI:29105"/>
    </ligand>
</feature>
<feature type="binding site" evidence="13">
    <location>
        <position position="1186"/>
    </location>
    <ligand>
        <name>Zn(2+)</name>
        <dbReference type="ChEBI" id="CHEBI:29105"/>
    </ligand>
</feature>
<feature type="binding site" evidence="13">
    <location>
        <position position="1189"/>
    </location>
    <ligand>
        <name>Zn(2+)</name>
        <dbReference type="ChEBI" id="CHEBI:29105"/>
    </ligand>
</feature>
<feature type="binding site" evidence="1">
    <location>
        <position position="1210"/>
    </location>
    <ligand>
        <name>Mg(2+)</name>
        <dbReference type="ChEBI" id="CHEBI:18420"/>
        <label>3</label>
        <note>catalytic; for integrase activity</note>
    </ligand>
</feature>
<feature type="binding site" evidence="1">
    <location>
        <position position="1262"/>
    </location>
    <ligand>
        <name>Mg(2+)</name>
        <dbReference type="ChEBI" id="CHEBI:18420"/>
        <label>3</label>
        <note>catalytic; for integrase activity</note>
    </ligand>
</feature>
<feature type="binding site" evidence="5">
    <location>
        <position position="1298"/>
    </location>
    <ligand>
        <name>Mg(2+)</name>
        <dbReference type="ChEBI" id="CHEBI:18420"/>
        <label>3</label>
        <note>catalytic; for integrase activity</note>
    </ligand>
</feature>
<feature type="site" description="Cleavage; by viral protease" evidence="1">
    <location>
        <begin position="130"/>
        <end position="131"/>
    </location>
</feature>
<feature type="site" description="Cis/trans isomerization of proline peptide bond; by human PPIA/CYPA" evidence="1">
    <location>
        <begin position="219"/>
        <end position="220"/>
    </location>
</feature>
<feature type="site" description="Cleavage; by viral protease" evidence="1">
    <location>
        <begin position="362"/>
        <end position="363"/>
    </location>
</feature>
<feature type="site" description="Cleavage; by viral protease" evidence="8">
    <location>
        <begin position="380" status="uncertain"/>
        <end position="381" status="uncertain"/>
    </location>
</feature>
<feature type="site" description="Cleavage; by viral protease" evidence="8">
    <location>
        <begin position="434" status="uncertain"/>
        <end position="435" status="uncertain"/>
    </location>
</feature>
<feature type="site" description="Cleavage; by viral protease" evidence="8">
    <location>
        <begin position="442" status="uncertain"/>
        <end position="443" status="uncertain"/>
    </location>
</feature>
<feature type="site" description="Cleavage; by viral protease" evidence="8">
    <location>
        <begin position="486" status="uncertain"/>
        <end position="487" status="uncertain"/>
    </location>
</feature>
<feature type="site" description="Cleavage; by viral protease" evidence="1">
    <location>
        <begin position="585"/>
        <end position="586"/>
    </location>
</feature>
<feature type="site" description="Essential for RT p66/p51 heterodimerization" evidence="1">
    <location>
        <position position="986"/>
    </location>
</feature>
<feature type="site" description="Essential for RT p66/p51 heterodimerization" evidence="1">
    <location>
        <position position="999"/>
    </location>
</feature>
<feature type="site" description="Cleavage; by viral protease; partial" evidence="8">
    <location>
        <begin position="1025" status="uncertain"/>
        <end position="1026" status="uncertain"/>
    </location>
</feature>
<feature type="site" description="Cleavage; by viral protease" evidence="1">
    <location>
        <begin position="1146"/>
        <end position="1147"/>
    </location>
</feature>
<feature type="modified residue" description="Phosphotyrosine; by host" evidence="1">
    <location>
        <position position="130"/>
    </location>
</feature>
<feature type="lipid moiety-binding region" description="N-myristoyl glycine; by host" evidence="1">
    <location>
        <position position="2"/>
    </location>
</feature>
<protein>
    <recommendedName>
        <fullName>Gag-Pol polyprotein</fullName>
    </recommendedName>
    <alternativeName>
        <fullName>Pr160Gag-Pol</fullName>
    </alternativeName>
    <component>
        <recommendedName>
            <fullName>Matrix protein p17</fullName>
            <shortName>MA</shortName>
        </recommendedName>
    </component>
    <component>
        <recommendedName>
            <fullName>Capsid protein p24</fullName>
            <shortName>CA</shortName>
        </recommendedName>
    </component>
    <component>
        <recommendedName>
            <fullName evidence="7">Spacer peptide 1</fullName>
            <shortName>SP1</shortName>
        </recommendedName>
        <alternativeName>
            <fullName>p2</fullName>
        </alternativeName>
    </component>
    <component>
        <recommendedName>
            <fullName>Nucleocapsid protein p7</fullName>
            <shortName>NC</shortName>
        </recommendedName>
    </component>
    <component>
        <recommendedName>
            <fullName>Transframe peptide</fullName>
            <shortName>TF</shortName>
        </recommendedName>
    </component>
    <component>
        <recommendedName>
            <fullName>p6-pol</fullName>
            <shortName>p6*</shortName>
        </recommendedName>
    </component>
    <component>
        <recommendedName>
            <fullName>Protease</fullName>
            <ecNumber>3.4.23.16</ecNumber>
        </recommendedName>
        <alternativeName>
            <fullName>PR</fullName>
        </alternativeName>
        <alternativeName>
            <fullName>Retropepsin</fullName>
        </alternativeName>
    </component>
    <component>
        <recommendedName>
            <fullName>Reverse transcriptase/ribonuclease H</fullName>
            <ecNumber>2.7.7.49</ecNumber>
            <ecNumber>2.7.7.7</ecNumber>
            <ecNumber>3.1.26.13</ecNumber>
        </recommendedName>
        <alternativeName>
            <fullName>Exoribonuclease H</fullName>
            <ecNumber>3.1.13.2</ecNumber>
        </alternativeName>
        <alternativeName>
            <fullName>p66 RT</fullName>
        </alternativeName>
    </component>
    <component>
        <recommendedName>
            <fullName>p51 RT</fullName>
        </recommendedName>
    </component>
    <component>
        <recommendedName>
            <fullName>p15</fullName>
        </recommendedName>
    </component>
    <component>
        <recommendedName>
            <fullName>Integrase</fullName>
            <shortName>IN</shortName>
            <ecNumber evidence="5">2.7.7.-</ecNumber>
            <ecNumber evidence="5">3.1.-.-</ecNumber>
        </recommendedName>
    </component>
</protein>
<dbReference type="EC" id="3.4.23.16"/>
<dbReference type="EC" id="2.7.7.49"/>
<dbReference type="EC" id="2.7.7.7"/>
<dbReference type="EC" id="3.1.26.13"/>
<dbReference type="EC" id="3.1.13.2"/>
<dbReference type="EC" id="2.7.7.-" evidence="5"/>
<dbReference type="EC" id="3.1.-.-" evidence="5"/>
<dbReference type="EMBL" id="L20587">
    <property type="protein sequence ID" value="AAA99879.1"/>
    <property type="status" value="ALT_SEQ"/>
    <property type="molecule type" value="Genomic_RNA"/>
</dbReference>
<dbReference type="MEROPS" id="A02.001"/>
<dbReference type="PRO" id="PR:Q77373"/>
<dbReference type="Proteomes" id="UP000007689">
    <property type="component" value="Segment"/>
</dbReference>
<dbReference type="GO" id="GO:0043657">
    <property type="term" value="C:host cell"/>
    <property type="evidence" value="ECO:0007669"/>
    <property type="project" value="GOC"/>
</dbReference>
<dbReference type="GO" id="GO:0042025">
    <property type="term" value="C:host cell nucleus"/>
    <property type="evidence" value="ECO:0007669"/>
    <property type="project" value="UniProtKB-SubCell"/>
</dbReference>
<dbReference type="GO" id="GO:0020002">
    <property type="term" value="C:host cell plasma membrane"/>
    <property type="evidence" value="ECO:0007669"/>
    <property type="project" value="UniProtKB-SubCell"/>
</dbReference>
<dbReference type="GO" id="GO:0072494">
    <property type="term" value="C:host multivesicular body"/>
    <property type="evidence" value="ECO:0007669"/>
    <property type="project" value="UniProtKB-SubCell"/>
</dbReference>
<dbReference type="GO" id="GO:0016020">
    <property type="term" value="C:membrane"/>
    <property type="evidence" value="ECO:0007669"/>
    <property type="project" value="UniProtKB-KW"/>
</dbReference>
<dbReference type="GO" id="GO:0019013">
    <property type="term" value="C:viral nucleocapsid"/>
    <property type="evidence" value="ECO:0007669"/>
    <property type="project" value="UniProtKB-KW"/>
</dbReference>
<dbReference type="GO" id="GO:0055036">
    <property type="term" value="C:virion membrane"/>
    <property type="evidence" value="ECO:0007669"/>
    <property type="project" value="UniProtKB-SubCell"/>
</dbReference>
<dbReference type="GO" id="GO:0004190">
    <property type="term" value="F:aspartic-type endopeptidase activity"/>
    <property type="evidence" value="ECO:0007669"/>
    <property type="project" value="UniProtKB-KW"/>
</dbReference>
<dbReference type="GO" id="GO:0003677">
    <property type="term" value="F:DNA binding"/>
    <property type="evidence" value="ECO:0007669"/>
    <property type="project" value="UniProtKB-KW"/>
</dbReference>
<dbReference type="GO" id="GO:0003887">
    <property type="term" value="F:DNA-directed DNA polymerase activity"/>
    <property type="evidence" value="ECO:0007669"/>
    <property type="project" value="UniProtKB-KW"/>
</dbReference>
<dbReference type="GO" id="GO:0004533">
    <property type="term" value="F:exoribonuclease H activity"/>
    <property type="evidence" value="ECO:0007669"/>
    <property type="project" value="UniProtKB-EC"/>
</dbReference>
<dbReference type="GO" id="GO:0008289">
    <property type="term" value="F:lipid binding"/>
    <property type="evidence" value="ECO:0007669"/>
    <property type="project" value="UniProtKB-KW"/>
</dbReference>
<dbReference type="GO" id="GO:0035613">
    <property type="term" value="F:RNA stem-loop binding"/>
    <property type="evidence" value="ECO:0007669"/>
    <property type="project" value="TreeGrafter"/>
</dbReference>
<dbReference type="GO" id="GO:0003964">
    <property type="term" value="F:RNA-directed DNA polymerase activity"/>
    <property type="evidence" value="ECO:0007669"/>
    <property type="project" value="UniProtKB-KW"/>
</dbReference>
<dbReference type="GO" id="GO:0004523">
    <property type="term" value="F:RNA-DNA hybrid ribonuclease activity"/>
    <property type="evidence" value="ECO:0007669"/>
    <property type="project" value="InterPro"/>
</dbReference>
<dbReference type="GO" id="GO:0005198">
    <property type="term" value="F:structural molecule activity"/>
    <property type="evidence" value="ECO:0007669"/>
    <property type="project" value="InterPro"/>
</dbReference>
<dbReference type="GO" id="GO:0008270">
    <property type="term" value="F:zinc ion binding"/>
    <property type="evidence" value="ECO:0007669"/>
    <property type="project" value="UniProtKB-KW"/>
</dbReference>
<dbReference type="GO" id="GO:0015074">
    <property type="term" value="P:DNA integration"/>
    <property type="evidence" value="ECO:0007669"/>
    <property type="project" value="UniProtKB-KW"/>
</dbReference>
<dbReference type="GO" id="GO:0006310">
    <property type="term" value="P:DNA recombination"/>
    <property type="evidence" value="ECO:0007669"/>
    <property type="project" value="UniProtKB-KW"/>
</dbReference>
<dbReference type="GO" id="GO:0075713">
    <property type="term" value="P:establishment of integrated proviral latency"/>
    <property type="evidence" value="ECO:0007669"/>
    <property type="project" value="UniProtKB-KW"/>
</dbReference>
<dbReference type="GO" id="GO:0006508">
    <property type="term" value="P:proteolysis"/>
    <property type="evidence" value="ECO:0007669"/>
    <property type="project" value="UniProtKB-KW"/>
</dbReference>
<dbReference type="GO" id="GO:0046718">
    <property type="term" value="P:symbiont entry into host cell"/>
    <property type="evidence" value="ECO:0007669"/>
    <property type="project" value="UniProtKB-KW"/>
</dbReference>
<dbReference type="GO" id="GO:0052151">
    <property type="term" value="P:symbiont-mediated activation of host apoptosis"/>
    <property type="evidence" value="ECO:0007669"/>
    <property type="project" value="UniProtKB-KW"/>
</dbReference>
<dbReference type="GO" id="GO:0039657">
    <property type="term" value="P:symbiont-mediated suppression of host gene expression"/>
    <property type="evidence" value="ECO:0007669"/>
    <property type="project" value="UniProtKB-KW"/>
</dbReference>
<dbReference type="GO" id="GO:0044826">
    <property type="term" value="P:viral genome integration into host DNA"/>
    <property type="evidence" value="ECO:0007669"/>
    <property type="project" value="UniProtKB-KW"/>
</dbReference>
<dbReference type="GO" id="GO:0075732">
    <property type="term" value="P:viral penetration into host nucleus"/>
    <property type="evidence" value="ECO:0007669"/>
    <property type="project" value="UniProtKB-KW"/>
</dbReference>
<dbReference type="GO" id="GO:0075523">
    <property type="term" value="P:viral translational frameshifting"/>
    <property type="evidence" value="ECO:0007669"/>
    <property type="project" value="UniProtKB-KW"/>
</dbReference>
<dbReference type="CDD" id="cd05482">
    <property type="entry name" value="HIV_retropepsin_like"/>
    <property type="match status" value="1"/>
</dbReference>
<dbReference type="CDD" id="cd09276">
    <property type="entry name" value="Rnase_HI_RT_non_LTR"/>
    <property type="match status" value="1"/>
</dbReference>
<dbReference type="FunFam" id="1.10.1200.30:FF:000001">
    <property type="entry name" value="Gag polyprotein"/>
    <property type="match status" value="1"/>
</dbReference>
<dbReference type="FunFam" id="3.30.70.270:FF:000006">
    <property type="entry name" value="Gag-Pol polyprotein"/>
    <property type="match status" value="1"/>
</dbReference>
<dbReference type="Gene3D" id="1.10.10.200">
    <property type="match status" value="1"/>
</dbReference>
<dbReference type="Gene3D" id="1.10.1200.30">
    <property type="match status" value="1"/>
</dbReference>
<dbReference type="Gene3D" id="3.30.70.270">
    <property type="match status" value="3"/>
</dbReference>
<dbReference type="Gene3D" id="2.40.70.10">
    <property type="entry name" value="Acid Proteases"/>
    <property type="match status" value="1"/>
</dbReference>
<dbReference type="Gene3D" id="3.10.10.10">
    <property type="entry name" value="HIV Type 1 Reverse Transcriptase, subunit A, domain 1"/>
    <property type="match status" value="1"/>
</dbReference>
<dbReference type="Gene3D" id="1.10.375.10">
    <property type="entry name" value="Human Immunodeficiency Virus Type 1 Capsid Protein"/>
    <property type="match status" value="1"/>
</dbReference>
<dbReference type="Gene3D" id="1.10.150.90">
    <property type="entry name" value="Immunodeficiency lentiviruses, gag gene matrix protein p17"/>
    <property type="match status" value="1"/>
</dbReference>
<dbReference type="Gene3D" id="2.30.30.10">
    <property type="entry name" value="Integrase, C-terminal domain superfamily, retroviral"/>
    <property type="match status" value="1"/>
</dbReference>
<dbReference type="Gene3D" id="3.30.420.10">
    <property type="entry name" value="Ribonuclease H-like superfamily/Ribonuclease H"/>
    <property type="match status" value="2"/>
</dbReference>
<dbReference type="Gene3D" id="1.20.5.760">
    <property type="entry name" value="Single helix bin"/>
    <property type="match status" value="1"/>
</dbReference>
<dbReference type="Gene3D" id="4.10.60.10">
    <property type="entry name" value="Zinc finger, CCHC-type"/>
    <property type="match status" value="1"/>
</dbReference>
<dbReference type="InterPro" id="IPR001969">
    <property type="entry name" value="Aspartic_peptidase_AS"/>
</dbReference>
<dbReference type="InterPro" id="IPR043502">
    <property type="entry name" value="DNA/RNA_pol_sf"/>
</dbReference>
<dbReference type="InterPro" id="IPR045345">
    <property type="entry name" value="Gag_p24_C"/>
</dbReference>
<dbReference type="InterPro" id="IPR017856">
    <property type="entry name" value="Integrase-like_N"/>
</dbReference>
<dbReference type="InterPro" id="IPR036862">
    <property type="entry name" value="Integrase_C_dom_sf_retrovir"/>
</dbReference>
<dbReference type="InterPro" id="IPR001037">
    <property type="entry name" value="Integrase_C_retrovir"/>
</dbReference>
<dbReference type="InterPro" id="IPR001584">
    <property type="entry name" value="Integrase_cat-core"/>
</dbReference>
<dbReference type="InterPro" id="IPR003308">
    <property type="entry name" value="Integrase_Zn-bd_dom_N"/>
</dbReference>
<dbReference type="InterPro" id="IPR000071">
    <property type="entry name" value="Lentvrl_matrix_N"/>
</dbReference>
<dbReference type="InterPro" id="IPR012344">
    <property type="entry name" value="Matrix_HIV/RSV_N"/>
</dbReference>
<dbReference type="InterPro" id="IPR001995">
    <property type="entry name" value="Peptidase_A2_cat"/>
</dbReference>
<dbReference type="InterPro" id="IPR021109">
    <property type="entry name" value="Peptidase_aspartic_dom_sf"/>
</dbReference>
<dbReference type="InterPro" id="IPR034170">
    <property type="entry name" value="Retropepsin-like_cat_dom"/>
</dbReference>
<dbReference type="InterPro" id="IPR018061">
    <property type="entry name" value="Retropepsins"/>
</dbReference>
<dbReference type="InterPro" id="IPR008916">
    <property type="entry name" value="Retrov_capsid_C"/>
</dbReference>
<dbReference type="InterPro" id="IPR008919">
    <property type="entry name" value="Retrov_capsid_N"/>
</dbReference>
<dbReference type="InterPro" id="IPR010999">
    <property type="entry name" value="Retrovr_matrix"/>
</dbReference>
<dbReference type="InterPro" id="IPR043128">
    <property type="entry name" value="Rev_trsase/Diguanyl_cyclase"/>
</dbReference>
<dbReference type="InterPro" id="IPR012337">
    <property type="entry name" value="RNaseH-like_sf"/>
</dbReference>
<dbReference type="InterPro" id="IPR002156">
    <property type="entry name" value="RNaseH_domain"/>
</dbReference>
<dbReference type="InterPro" id="IPR036397">
    <property type="entry name" value="RNaseH_sf"/>
</dbReference>
<dbReference type="InterPro" id="IPR000477">
    <property type="entry name" value="RT_dom"/>
</dbReference>
<dbReference type="InterPro" id="IPR010659">
    <property type="entry name" value="RVT_connect"/>
</dbReference>
<dbReference type="InterPro" id="IPR010661">
    <property type="entry name" value="RVT_thumb"/>
</dbReference>
<dbReference type="InterPro" id="IPR001878">
    <property type="entry name" value="Znf_CCHC"/>
</dbReference>
<dbReference type="InterPro" id="IPR036875">
    <property type="entry name" value="Znf_CCHC_sf"/>
</dbReference>
<dbReference type="PANTHER" id="PTHR41694">
    <property type="entry name" value="ENDOGENOUS RETROVIRUS GROUP K MEMBER POL PROTEIN"/>
    <property type="match status" value="1"/>
</dbReference>
<dbReference type="PANTHER" id="PTHR41694:SF3">
    <property type="entry name" value="RNA-DIRECTED DNA POLYMERASE-RELATED"/>
    <property type="match status" value="1"/>
</dbReference>
<dbReference type="Pfam" id="PF00540">
    <property type="entry name" value="Gag_p17"/>
    <property type="match status" value="1"/>
</dbReference>
<dbReference type="Pfam" id="PF00607">
    <property type="entry name" value="Gag_p24"/>
    <property type="match status" value="1"/>
</dbReference>
<dbReference type="Pfam" id="PF19317">
    <property type="entry name" value="Gag_p24_C"/>
    <property type="match status" value="1"/>
</dbReference>
<dbReference type="Pfam" id="PF00552">
    <property type="entry name" value="IN_DBD_C"/>
    <property type="match status" value="1"/>
</dbReference>
<dbReference type="Pfam" id="PF02022">
    <property type="entry name" value="Integrase_Zn"/>
    <property type="match status" value="1"/>
</dbReference>
<dbReference type="Pfam" id="PF00075">
    <property type="entry name" value="RNase_H"/>
    <property type="match status" value="1"/>
</dbReference>
<dbReference type="Pfam" id="PF00665">
    <property type="entry name" value="rve"/>
    <property type="match status" value="1"/>
</dbReference>
<dbReference type="Pfam" id="PF00077">
    <property type="entry name" value="RVP"/>
    <property type="match status" value="1"/>
</dbReference>
<dbReference type="Pfam" id="PF00078">
    <property type="entry name" value="RVT_1"/>
    <property type="match status" value="1"/>
</dbReference>
<dbReference type="Pfam" id="PF06815">
    <property type="entry name" value="RVT_connect"/>
    <property type="match status" value="1"/>
</dbReference>
<dbReference type="Pfam" id="PF06817">
    <property type="entry name" value="RVT_thumb"/>
    <property type="match status" value="1"/>
</dbReference>
<dbReference type="Pfam" id="PF00098">
    <property type="entry name" value="zf-CCHC"/>
    <property type="match status" value="2"/>
</dbReference>
<dbReference type="PRINTS" id="PR00234">
    <property type="entry name" value="HIV1MATRIX"/>
</dbReference>
<dbReference type="SMART" id="SM00343">
    <property type="entry name" value="ZnF_C2HC"/>
    <property type="match status" value="2"/>
</dbReference>
<dbReference type="SUPFAM" id="SSF50630">
    <property type="entry name" value="Acid proteases"/>
    <property type="match status" value="1"/>
</dbReference>
<dbReference type="SUPFAM" id="SSF50122">
    <property type="entry name" value="DNA-binding domain of retroviral integrase"/>
    <property type="match status" value="1"/>
</dbReference>
<dbReference type="SUPFAM" id="SSF56672">
    <property type="entry name" value="DNA/RNA polymerases"/>
    <property type="match status" value="1"/>
</dbReference>
<dbReference type="SUPFAM" id="SSF46919">
    <property type="entry name" value="N-terminal Zn binding domain of HIV integrase"/>
    <property type="match status" value="1"/>
</dbReference>
<dbReference type="SUPFAM" id="SSF47836">
    <property type="entry name" value="Retroviral matrix proteins"/>
    <property type="match status" value="1"/>
</dbReference>
<dbReference type="SUPFAM" id="SSF47353">
    <property type="entry name" value="Retrovirus capsid dimerization domain-like"/>
    <property type="match status" value="1"/>
</dbReference>
<dbReference type="SUPFAM" id="SSF47943">
    <property type="entry name" value="Retrovirus capsid protein, N-terminal core domain"/>
    <property type="match status" value="1"/>
</dbReference>
<dbReference type="SUPFAM" id="SSF57756">
    <property type="entry name" value="Retrovirus zinc finger-like domains"/>
    <property type="match status" value="1"/>
</dbReference>
<dbReference type="SUPFAM" id="SSF53098">
    <property type="entry name" value="Ribonuclease H-like"/>
    <property type="match status" value="2"/>
</dbReference>
<dbReference type="PROSITE" id="PS50175">
    <property type="entry name" value="ASP_PROT_RETROV"/>
    <property type="match status" value="1"/>
</dbReference>
<dbReference type="PROSITE" id="PS00141">
    <property type="entry name" value="ASP_PROTEASE"/>
    <property type="match status" value="1"/>
</dbReference>
<dbReference type="PROSITE" id="PS50994">
    <property type="entry name" value="INTEGRASE"/>
    <property type="match status" value="1"/>
</dbReference>
<dbReference type="PROSITE" id="PS51027">
    <property type="entry name" value="INTEGRASE_DBD"/>
    <property type="match status" value="1"/>
</dbReference>
<dbReference type="PROSITE" id="PS50879">
    <property type="entry name" value="RNASE_H_1"/>
    <property type="match status" value="1"/>
</dbReference>
<dbReference type="PROSITE" id="PS50878">
    <property type="entry name" value="RT_POL"/>
    <property type="match status" value="1"/>
</dbReference>
<dbReference type="PROSITE" id="PS50158">
    <property type="entry name" value="ZF_CCHC"/>
    <property type="match status" value="2"/>
</dbReference>
<dbReference type="PROSITE" id="PS50876">
    <property type="entry name" value="ZF_INTEGRASE"/>
    <property type="match status" value="1"/>
</dbReference>
<keyword id="KW-1073">Activation of host caspases by virus</keyword>
<keyword id="KW-0014">AIDS</keyword>
<keyword id="KW-0064">Aspartyl protease</keyword>
<keyword id="KW-0167">Capsid protein</keyword>
<keyword id="KW-0229">DNA integration</keyword>
<keyword id="KW-0233">DNA recombination</keyword>
<keyword id="KW-0238">DNA-binding</keyword>
<keyword id="KW-0239">DNA-directed DNA polymerase</keyword>
<keyword id="KW-0255">Endonuclease</keyword>
<keyword id="KW-1262">Eukaryotic host gene expression shutoff by virus</keyword>
<keyword id="KW-1193">Eukaryotic host translation shutoff by virus</keyword>
<keyword id="KW-1032">Host cell membrane</keyword>
<keyword id="KW-1035">Host cytoplasm</keyword>
<keyword id="KW-1039">Host endosome</keyword>
<keyword id="KW-1190">Host gene expression shutoff by virus</keyword>
<keyword id="KW-1043">Host membrane</keyword>
<keyword id="KW-1048">Host nucleus</keyword>
<keyword id="KW-0945">Host-virus interaction</keyword>
<keyword id="KW-0378">Hydrolase</keyword>
<keyword id="KW-0446">Lipid-binding</keyword>
<keyword id="KW-0449">Lipoprotein</keyword>
<keyword id="KW-0460">Magnesium</keyword>
<keyword id="KW-0472">Membrane</keyword>
<keyword id="KW-0479">Metal-binding</keyword>
<keyword id="KW-1119">Modulation of host cell apoptosis by virus</keyword>
<keyword id="KW-0511">Multifunctional enzyme</keyword>
<keyword id="KW-0519">Myristate</keyword>
<keyword id="KW-0540">Nuclease</keyword>
<keyword id="KW-0548">Nucleotidyltransferase</keyword>
<keyword id="KW-0597">Phosphoprotein</keyword>
<keyword id="KW-0645">Protease</keyword>
<keyword id="KW-1185">Reference proteome</keyword>
<keyword id="KW-0677">Repeat</keyword>
<keyword id="KW-0688">Ribosomal frameshifting</keyword>
<keyword id="KW-0694">RNA-binding</keyword>
<keyword id="KW-0695">RNA-directed DNA polymerase</keyword>
<keyword id="KW-0808">Transferase</keyword>
<keyword id="KW-1179">Viral genome integration</keyword>
<keyword id="KW-0543">Viral nucleoprotein</keyword>
<keyword id="KW-1163">Viral penetration into host nucleus</keyword>
<keyword id="KW-1188">Viral release from host cell</keyword>
<keyword id="KW-0946">Virion</keyword>
<keyword id="KW-0917">Virion maturation</keyword>
<keyword id="KW-1160">Virus entry into host cell</keyword>
<keyword id="KW-0862">Zinc</keyword>
<keyword id="KW-0863">Zinc-finger</keyword>
<accession>Q77373</accession>